<accession>A6R371</accession>
<keyword id="KW-0539">Nucleus</keyword>
<keyword id="KW-1185">Reference proteome</keyword>
<keyword id="KW-0690">Ribosome biogenesis</keyword>
<keyword id="KW-0698">rRNA processing</keyword>
<feature type="chain" id="PRO_0000324876" description="Protein PXR1">
    <location>
        <begin position="1"/>
        <end position="320"/>
    </location>
</feature>
<feature type="domain" description="G-patch" evidence="2">
    <location>
        <begin position="25"/>
        <end position="79"/>
    </location>
</feature>
<feature type="region of interest" description="Disordered" evidence="3">
    <location>
        <begin position="1"/>
        <end position="24"/>
    </location>
</feature>
<feature type="region of interest" description="Disordered" evidence="3">
    <location>
        <begin position="152"/>
        <end position="298"/>
    </location>
</feature>
<feature type="compositionally biased region" description="Basic residues" evidence="3">
    <location>
        <begin position="1"/>
        <end position="11"/>
    </location>
</feature>
<feature type="compositionally biased region" description="Polar residues" evidence="3">
    <location>
        <begin position="15"/>
        <end position="24"/>
    </location>
</feature>
<feature type="compositionally biased region" description="Basic residues" evidence="3">
    <location>
        <begin position="169"/>
        <end position="182"/>
    </location>
</feature>
<feature type="compositionally biased region" description="Basic and acidic residues" evidence="3">
    <location>
        <begin position="203"/>
        <end position="214"/>
    </location>
</feature>
<feature type="compositionally biased region" description="Basic and acidic residues" evidence="3">
    <location>
        <begin position="243"/>
        <end position="256"/>
    </location>
</feature>
<feature type="compositionally biased region" description="Basic and acidic residues" evidence="3">
    <location>
        <begin position="269"/>
        <end position="288"/>
    </location>
</feature>
<organism>
    <name type="scientific">Ajellomyces capsulatus (strain NAm1 / WU24)</name>
    <name type="common">Darling's disease fungus</name>
    <name type="synonym">Histoplasma capsulatum</name>
    <dbReference type="NCBI Taxonomy" id="2059318"/>
    <lineage>
        <taxon>Eukaryota</taxon>
        <taxon>Fungi</taxon>
        <taxon>Dikarya</taxon>
        <taxon>Ascomycota</taxon>
        <taxon>Pezizomycotina</taxon>
        <taxon>Eurotiomycetes</taxon>
        <taxon>Eurotiomycetidae</taxon>
        <taxon>Onygenales</taxon>
        <taxon>Ajellomycetaceae</taxon>
        <taxon>Histoplasma</taxon>
    </lineage>
</organism>
<dbReference type="EMBL" id="CH476658">
    <property type="protein sequence ID" value="EDN07569.1"/>
    <property type="molecule type" value="Genomic_DNA"/>
</dbReference>
<dbReference type="STRING" id="339724.A6R371"/>
<dbReference type="KEGG" id="aje:HCAG_04079"/>
<dbReference type="VEuPathDB" id="FungiDB:HCAG_04079"/>
<dbReference type="HOGENOM" id="CLU_052839_0_0_1"/>
<dbReference type="OMA" id="PCWDQSS"/>
<dbReference type="OrthoDB" id="9300at299071"/>
<dbReference type="Proteomes" id="UP000009297">
    <property type="component" value="Unassembled WGS sequence"/>
</dbReference>
<dbReference type="GO" id="GO:0005730">
    <property type="term" value="C:nucleolus"/>
    <property type="evidence" value="ECO:0007669"/>
    <property type="project" value="UniProtKB-SubCell"/>
</dbReference>
<dbReference type="GO" id="GO:0003676">
    <property type="term" value="F:nucleic acid binding"/>
    <property type="evidence" value="ECO:0007669"/>
    <property type="project" value="InterPro"/>
</dbReference>
<dbReference type="GO" id="GO:0006364">
    <property type="term" value="P:rRNA processing"/>
    <property type="evidence" value="ECO:0007669"/>
    <property type="project" value="UniProtKB-KW"/>
</dbReference>
<dbReference type="InterPro" id="IPR000467">
    <property type="entry name" value="G_patch_dom"/>
</dbReference>
<dbReference type="InterPro" id="IPR050656">
    <property type="entry name" value="PINX1"/>
</dbReference>
<dbReference type="PANTHER" id="PTHR23149">
    <property type="entry name" value="G PATCH DOMAIN CONTAINING PROTEIN"/>
    <property type="match status" value="1"/>
</dbReference>
<dbReference type="PANTHER" id="PTHR23149:SF31">
    <property type="entry name" value="PROTEIN PXR1"/>
    <property type="match status" value="1"/>
</dbReference>
<dbReference type="Pfam" id="PF01585">
    <property type="entry name" value="G-patch"/>
    <property type="match status" value="1"/>
</dbReference>
<dbReference type="SMART" id="SM00443">
    <property type="entry name" value="G_patch"/>
    <property type="match status" value="1"/>
</dbReference>
<dbReference type="PROSITE" id="PS50174">
    <property type="entry name" value="G_PATCH"/>
    <property type="match status" value="1"/>
</dbReference>
<comment type="function">
    <text evidence="1">Involved in rRNA-processing at A0, A1 and A2 sites and negatively regulates telomerase.</text>
</comment>
<comment type="subcellular location">
    <subcellularLocation>
        <location evidence="1">Nucleus</location>
        <location evidence="1">Nucleolus</location>
    </subcellularLocation>
</comment>
<comment type="similarity">
    <text evidence="4">Belongs to the PINX1 family.</text>
</comment>
<proteinExistence type="inferred from homology"/>
<name>PXR1_AJECN</name>
<evidence type="ECO:0000250" key="1"/>
<evidence type="ECO:0000255" key="2">
    <source>
        <dbReference type="PROSITE-ProRule" id="PRU00092"/>
    </source>
</evidence>
<evidence type="ECO:0000256" key="3">
    <source>
        <dbReference type="SAM" id="MobiDB-lite"/>
    </source>
</evidence>
<evidence type="ECO:0000305" key="4"/>
<reference key="1">
    <citation type="journal article" date="2009" name="Genome Res.">
        <title>Comparative genomic analyses of the human fungal pathogens Coccidioides and their relatives.</title>
        <authorList>
            <person name="Sharpton T.J."/>
            <person name="Stajich J.E."/>
            <person name="Rounsley S.D."/>
            <person name="Gardner M.J."/>
            <person name="Wortman J.R."/>
            <person name="Jordar V.S."/>
            <person name="Maiti R."/>
            <person name="Kodira C.D."/>
            <person name="Neafsey D.E."/>
            <person name="Zeng Q."/>
            <person name="Hung C.-Y."/>
            <person name="McMahan C."/>
            <person name="Muszewska A."/>
            <person name="Grynberg M."/>
            <person name="Mandel M.A."/>
            <person name="Kellner E.M."/>
            <person name="Barker B.M."/>
            <person name="Galgiani J.N."/>
            <person name="Orbach M.J."/>
            <person name="Kirkland T.N."/>
            <person name="Cole G.T."/>
            <person name="Henn M.R."/>
            <person name="Birren B.W."/>
            <person name="Taylor J.W."/>
        </authorList>
    </citation>
    <scope>NUCLEOTIDE SEQUENCE [LARGE SCALE GENOMIC DNA]</scope>
    <source>
        <strain>NAm1 / WU24</strain>
    </source>
</reference>
<protein>
    <recommendedName>
        <fullName>Protein PXR1</fullName>
    </recommendedName>
    <alternativeName>
        <fullName>PinX1-related protein 1</fullName>
    </alternativeName>
</protein>
<gene>
    <name type="primary">PXR1</name>
    <name type="ORF">HCAG_04079</name>
</gene>
<sequence>MGLAGPRKRTKISHDPNNTAWSRSTSGYGHKIMSAQGWTPGSFLGASNAAHADHFTAGSAGHIRVILKDDNLGLGAKLRAEDEPTGLDAFQGLLGRLNGKSDEELEKELKKRHDRQLANFVEKRWKTMQFVSGGLLVHEKIQALADVKSAGGEEVQTPQISHDELKSEKRPKKARKKEKRRARGDDTGLDLAEQSPKRKRKDRKENKEKKKSSDDSSYANQGTPSEDALVDKIQKKRKKRKQKDPEPSNTEVHDDSLPPDTRSVSQEEQESRYSAKNESIRKIREHRPMGRQFTRGRHIQQKKLALMDSKSISEIFMVKC</sequence>